<accession>Q10XP0</accession>
<organism>
    <name type="scientific">Trichodesmium erythraeum (strain IMS101)</name>
    <dbReference type="NCBI Taxonomy" id="203124"/>
    <lineage>
        <taxon>Bacteria</taxon>
        <taxon>Bacillati</taxon>
        <taxon>Cyanobacteriota</taxon>
        <taxon>Cyanophyceae</taxon>
        <taxon>Oscillatoriophycideae</taxon>
        <taxon>Oscillatoriales</taxon>
        <taxon>Microcoleaceae</taxon>
        <taxon>Trichodesmium</taxon>
    </lineage>
</organism>
<keyword id="KW-0169">Cobalamin biosynthesis</keyword>
<keyword id="KW-0315">Glutamine amidotransferase</keyword>
<evidence type="ECO:0000255" key="1">
    <source>
        <dbReference type="HAMAP-Rule" id="MF_00028"/>
    </source>
</evidence>
<reference key="1">
    <citation type="journal article" date="2015" name="Proc. Natl. Acad. Sci. U.S.A.">
        <title>Trichodesmium genome maintains abundant, widespread noncoding DNA in situ, despite oligotrophic lifestyle.</title>
        <authorList>
            <person name="Walworth N."/>
            <person name="Pfreundt U."/>
            <person name="Nelson W.C."/>
            <person name="Mincer T."/>
            <person name="Heidelberg J.F."/>
            <person name="Fu F."/>
            <person name="Waterbury J.B."/>
            <person name="Glavina del Rio T."/>
            <person name="Goodwin L."/>
            <person name="Kyrpides N.C."/>
            <person name="Land M.L."/>
            <person name="Woyke T."/>
            <person name="Hutchins D.A."/>
            <person name="Hess W.R."/>
            <person name="Webb E.A."/>
        </authorList>
    </citation>
    <scope>NUCLEOTIDE SEQUENCE [LARGE SCALE GENOMIC DNA]</scope>
    <source>
        <strain>IMS101</strain>
    </source>
</reference>
<sequence>MKAIMVVGTTSHAGKSLITTAICRILSRRGWKVTPFKGQNMALNSYVTSTGGEMGHAQAVQAWAAGVTPAIEMNPILLKPQGDMTSQVIIKGKASGTVGAVDYYQQYFDIGWNAIQESLETLSQEFNMIVCEGAGSPAEINLKHRDLTNMRVAKHLNASTILVVDIDRGGAFAHIIGTLELLEPEERNLIKGIVINKFRGQRSLLDSGIHWLEKKTNIPVIGVIPWINEAFPAEDSLSILEQRYNKHTTDITIAIIRLPRISNFTDFEPLEAESSVKIKYIHPNDSLGDPDAIIIPGTKTTINDLLVLQKSGMAEAIKSYQSSGGIVMGICGGFQMLGEVLIDSQGLEGKQGEYKGLELLPLITTITPKKIASQRQVIANYPLGNLPVIGYEIHQGRTIVTKPDIVKPLFNDYDLGFVDSYDSIWGNYLHGIFDNGSWRRSWLNILRHKRGLNSLPTSISNYREQREIILDSIADKVNEHLDLKPVLT</sequence>
<proteinExistence type="inferred from homology"/>
<gene>
    <name evidence="1" type="primary">cobQ</name>
    <name type="ordered locus">Tery_3957</name>
</gene>
<dbReference type="EMBL" id="CP000393">
    <property type="protein sequence ID" value="ABG52984.1"/>
    <property type="molecule type" value="Genomic_DNA"/>
</dbReference>
<dbReference type="RefSeq" id="WP_011613314.1">
    <property type="nucleotide sequence ID" value="NC_008312.1"/>
</dbReference>
<dbReference type="SMR" id="Q10XP0"/>
<dbReference type="STRING" id="203124.Tery_3957"/>
<dbReference type="KEGG" id="ter:Tery_3957"/>
<dbReference type="eggNOG" id="COG1492">
    <property type="taxonomic scope" value="Bacteria"/>
</dbReference>
<dbReference type="HOGENOM" id="CLU_019250_2_2_3"/>
<dbReference type="OrthoDB" id="9808302at2"/>
<dbReference type="UniPathway" id="UPA00148"/>
<dbReference type="GO" id="GO:0015420">
    <property type="term" value="F:ABC-type vitamin B12 transporter activity"/>
    <property type="evidence" value="ECO:0007669"/>
    <property type="project" value="UniProtKB-UniRule"/>
</dbReference>
<dbReference type="GO" id="GO:0003824">
    <property type="term" value="F:catalytic activity"/>
    <property type="evidence" value="ECO:0007669"/>
    <property type="project" value="InterPro"/>
</dbReference>
<dbReference type="GO" id="GO:0009236">
    <property type="term" value="P:cobalamin biosynthetic process"/>
    <property type="evidence" value="ECO:0007669"/>
    <property type="project" value="UniProtKB-UniRule"/>
</dbReference>
<dbReference type="CDD" id="cd05389">
    <property type="entry name" value="CobQ_N"/>
    <property type="match status" value="1"/>
</dbReference>
<dbReference type="CDD" id="cd01750">
    <property type="entry name" value="GATase1_CobQ"/>
    <property type="match status" value="1"/>
</dbReference>
<dbReference type="Gene3D" id="3.40.50.880">
    <property type="match status" value="1"/>
</dbReference>
<dbReference type="Gene3D" id="3.40.50.300">
    <property type="entry name" value="P-loop containing nucleotide triphosphate hydrolases"/>
    <property type="match status" value="1"/>
</dbReference>
<dbReference type="HAMAP" id="MF_00028">
    <property type="entry name" value="CobQ"/>
    <property type="match status" value="1"/>
</dbReference>
<dbReference type="InterPro" id="IPR029062">
    <property type="entry name" value="Class_I_gatase-like"/>
</dbReference>
<dbReference type="InterPro" id="IPR002586">
    <property type="entry name" value="CobQ/CobB/MinD/ParA_Nub-bd_dom"/>
</dbReference>
<dbReference type="InterPro" id="IPR033949">
    <property type="entry name" value="CobQ_GATase1"/>
</dbReference>
<dbReference type="InterPro" id="IPR047045">
    <property type="entry name" value="CobQ_N"/>
</dbReference>
<dbReference type="InterPro" id="IPR004459">
    <property type="entry name" value="CobQ_synth"/>
</dbReference>
<dbReference type="InterPro" id="IPR011698">
    <property type="entry name" value="GATase_3"/>
</dbReference>
<dbReference type="InterPro" id="IPR027417">
    <property type="entry name" value="P-loop_NTPase"/>
</dbReference>
<dbReference type="NCBIfam" id="TIGR00313">
    <property type="entry name" value="cobQ"/>
    <property type="match status" value="1"/>
</dbReference>
<dbReference type="NCBIfam" id="NF001989">
    <property type="entry name" value="PRK00784.1"/>
    <property type="match status" value="1"/>
</dbReference>
<dbReference type="PANTHER" id="PTHR21343:SF1">
    <property type="entry name" value="COBYRIC ACID SYNTHASE"/>
    <property type="match status" value="1"/>
</dbReference>
<dbReference type="PANTHER" id="PTHR21343">
    <property type="entry name" value="DETHIOBIOTIN SYNTHETASE"/>
    <property type="match status" value="1"/>
</dbReference>
<dbReference type="Pfam" id="PF01656">
    <property type="entry name" value="CbiA"/>
    <property type="match status" value="1"/>
</dbReference>
<dbReference type="Pfam" id="PF07685">
    <property type="entry name" value="GATase_3"/>
    <property type="match status" value="1"/>
</dbReference>
<dbReference type="SUPFAM" id="SSF52317">
    <property type="entry name" value="Class I glutamine amidotransferase-like"/>
    <property type="match status" value="1"/>
</dbReference>
<dbReference type="SUPFAM" id="SSF52540">
    <property type="entry name" value="P-loop containing nucleoside triphosphate hydrolases"/>
    <property type="match status" value="1"/>
</dbReference>
<dbReference type="PROSITE" id="PS51274">
    <property type="entry name" value="GATASE_COBBQ"/>
    <property type="match status" value="1"/>
</dbReference>
<name>COBQ_TRIEI</name>
<protein>
    <recommendedName>
        <fullName evidence="1">Cobyric acid synthase</fullName>
    </recommendedName>
</protein>
<feature type="chain" id="PRO_0000332399" description="Cobyric acid synthase">
    <location>
        <begin position="1"/>
        <end position="488"/>
    </location>
</feature>
<feature type="domain" description="GATase cobBQ-type" evidence="1">
    <location>
        <begin position="250"/>
        <end position="438"/>
    </location>
</feature>
<feature type="active site" description="Nucleophile" evidence="1">
    <location>
        <position position="331"/>
    </location>
</feature>
<feature type="active site" evidence="1">
    <location>
        <position position="430"/>
    </location>
</feature>
<comment type="function">
    <text evidence="1">Catalyzes amidations at positions B, D, E, and G on adenosylcobyrinic A,C-diamide. NH(2) groups are provided by glutamine, and one molecule of ATP is hydrogenolyzed for each amidation.</text>
</comment>
<comment type="pathway">
    <text evidence="1">Cofactor biosynthesis; adenosylcobalamin biosynthesis.</text>
</comment>
<comment type="similarity">
    <text evidence="1">Belongs to the CobB/CobQ family. CobQ subfamily.</text>
</comment>